<feature type="chain" id="PRO_0000402760" description="3-aminoacrylate deaminase RutC">
    <location>
        <begin position="1"/>
        <end position="128"/>
    </location>
</feature>
<sequence>MPKRAIIPAGSGVPLAPFVPGTLADGVLYVSGTLPFDKDNNVVHVGDAAAQTRHVLEIIKSVIETAGGSMDDVTMNSIFITDWANYGAVNQVYAEYFPGEKPARFCIQCGLVKPDALIEIASIAHLGK</sequence>
<protein>
    <recommendedName>
        <fullName evidence="1">3-aminoacrylate deaminase RutC</fullName>
        <shortName evidence="1">3-AA deaminase</shortName>
        <ecNumber evidence="1">3.5.-.-</ecNumber>
    </recommendedName>
</protein>
<accession>D4GEU6</accession>
<proteinExistence type="inferred from homology"/>
<organism>
    <name type="scientific">Pantoea ananatis (strain LMG 20103)</name>
    <dbReference type="NCBI Taxonomy" id="706191"/>
    <lineage>
        <taxon>Bacteria</taxon>
        <taxon>Pseudomonadati</taxon>
        <taxon>Pseudomonadota</taxon>
        <taxon>Gammaproteobacteria</taxon>
        <taxon>Enterobacterales</taxon>
        <taxon>Erwiniaceae</taxon>
        <taxon>Pantoea</taxon>
    </lineage>
</organism>
<dbReference type="EC" id="3.5.-.-" evidence="1"/>
<dbReference type="EMBL" id="CP001875">
    <property type="protein sequence ID" value="ADD79202.1"/>
    <property type="molecule type" value="Genomic_DNA"/>
</dbReference>
<dbReference type="RefSeq" id="WP_013027868.1">
    <property type="nucleotide sequence ID" value="NC_013956.2"/>
</dbReference>
<dbReference type="SMR" id="D4GEU6"/>
<dbReference type="STRING" id="706191.PANA_4035"/>
<dbReference type="GeneID" id="57270381"/>
<dbReference type="KEGG" id="pam:PANA_4035"/>
<dbReference type="eggNOG" id="COG0251">
    <property type="taxonomic scope" value="Bacteria"/>
</dbReference>
<dbReference type="HOGENOM" id="CLU_100715_7_3_6"/>
<dbReference type="Proteomes" id="UP000001702">
    <property type="component" value="Chromosome"/>
</dbReference>
<dbReference type="GO" id="GO:0005829">
    <property type="term" value="C:cytosol"/>
    <property type="evidence" value="ECO:0007669"/>
    <property type="project" value="TreeGrafter"/>
</dbReference>
<dbReference type="GO" id="GO:0019239">
    <property type="term" value="F:deaminase activity"/>
    <property type="evidence" value="ECO:0007669"/>
    <property type="project" value="TreeGrafter"/>
</dbReference>
<dbReference type="GO" id="GO:0019740">
    <property type="term" value="P:nitrogen utilization"/>
    <property type="evidence" value="ECO:0007669"/>
    <property type="project" value="UniProtKB-UniRule"/>
</dbReference>
<dbReference type="GO" id="GO:0006212">
    <property type="term" value="P:uracil catabolic process"/>
    <property type="evidence" value="ECO:0007669"/>
    <property type="project" value="UniProtKB-UniRule"/>
</dbReference>
<dbReference type="CDD" id="cd00448">
    <property type="entry name" value="YjgF_YER057c_UK114_family"/>
    <property type="match status" value="1"/>
</dbReference>
<dbReference type="Gene3D" id="3.30.1330.40">
    <property type="entry name" value="RutC-like"/>
    <property type="match status" value="1"/>
</dbReference>
<dbReference type="HAMAP" id="MF_00831">
    <property type="entry name" value="RutC"/>
    <property type="match status" value="1"/>
</dbReference>
<dbReference type="InterPro" id="IPR019897">
    <property type="entry name" value="RidA_CS"/>
</dbReference>
<dbReference type="InterPro" id="IPR019898">
    <property type="entry name" value="RutC"/>
</dbReference>
<dbReference type="InterPro" id="IPR035959">
    <property type="entry name" value="RutC-like_sf"/>
</dbReference>
<dbReference type="InterPro" id="IPR006175">
    <property type="entry name" value="YjgF/YER057c/UK114"/>
</dbReference>
<dbReference type="NCBIfam" id="TIGR03610">
    <property type="entry name" value="RutC"/>
    <property type="match status" value="1"/>
</dbReference>
<dbReference type="PANTHER" id="PTHR11803">
    <property type="entry name" value="2-IMINOBUTANOATE/2-IMINOPROPANOATE DEAMINASE RIDA"/>
    <property type="match status" value="1"/>
</dbReference>
<dbReference type="PANTHER" id="PTHR11803:SF58">
    <property type="entry name" value="PROTEIN HMF1-RELATED"/>
    <property type="match status" value="1"/>
</dbReference>
<dbReference type="Pfam" id="PF01042">
    <property type="entry name" value="Ribonuc_L-PSP"/>
    <property type="match status" value="1"/>
</dbReference>
<dbReference type="SUPFAM" id="SSF55298">
    <property type="entry name" value="YjgF-like"/>
    <property type="match status" value="1"/>
</dbReference>
<dbReference type="PROSITE" id="PS01094">
    <property type="entry name" value="UPF0076"/>
    <property type="match status" value="1"/>
</dbReference>
<reference key="1">
    <citation type="journal article" date="2010" name="J. Bacteriol.">
        <title>Genome sequence of Pantoea ananatis LMG20103, the causative agent of Eucalyptus blight and dieback.</title>
        <authorList>
            <person name="De Maayer P."/>
            <person name="Chan W.Y."/>
            <person name="Venter S.N."/>
            <person name="Toth I.K."/>
            <person name="Birch P.R."/>
            <person name="Joubert F."/>
            <person name="Coutinho T.A."/>
        </authorList>
    </citation>
    <scope>NUCLEOTIDE SEQUENCE [LARGE SCALE GENOMIC DNA]</scope>
    <source>
        <strain>LMG 20103</strain>
    </source>
</reference>
<gene>
    <name evidence="1" type="primary">rutC</name>
    <name type="ordered locus">PANA_4035</name>
</gene>
<evidence type="ECO:0000255" key="1">
    <source>
        <dbReference type="HAMAP-Rule" id="MF_00831"/>
    </source>
</evidence>
<name>RUTC_PANAM</name>
<keyword id="KW-0378">Hydrolase</keyword>
<keyword id="KW-1185">Reference proteome</keyword>
<comment type="function">
    <text evidence="1">Involved in pyrimidine catabolism. Catalyzes the deamination of 3-aminoacrylate to malonic semialdehyde, a reaction that can also occur spontaneously. RutC may facilitate the reaction and modulate the metabolic fitness, rather than catalyzing essential functions.</text>
</comment>
<comment type="catalytic activity">
    <reaction evidence="1">
        <text>(Z)-3-aminoacrylate + H2O + H(+) = 3-oxopropanoate + NH4(+)</text>
        <dbReference type="Rhea" id="RHEA:34947"/>
        <dbReference type="ChEBI" id="CHEBI:15377"/>
        <dbReference type="ChEBI" id="CHEBI:15378"/>
        <dbReference type="ChEBI" id="CHEBI:28938"/>
        <dbReference type="ChEBI" id="CHEBI:33190"/>
        <dbReference type="ChEBI" id="CHEBI:59894"/>
    </reaction>
</comment>
<comment type="similarity">
    <text evidence="1">Belongs to the RutC family.</text>
</comment>